<organism>
    <name type="scientific">Hordeum vulgare</name>
    <name type="common">Barley</name>
    <dbReference type="NCBI Taxonomy" id="4513"/>
    <lineage>
        <taxon>Eukaryota</taxon>
        <taxon>Viridiplantae</taxon>
        <taxon>Streptophyta</taxon>
        <taxon>Embryophyta</taxon>
        <taxon>Tracheophyta</taxon>
        <taxon>Spermatophyta</taxon>
        <taxon>Magnoliopsida</taxon>
        <taxon>Liliopsida</taxon>
        <taxon>Poales</taxon>
        <taxon>Poaceae</taxon>
        <taxon>BOP clade</taxon>
        <taxon>Pooideae</taxon>
        <taxon>Triticodae</taxon>
        <taxon>Triticeae</taxon>
        <taxon>Hordeinae</taxon>
        <taxon>Hordeum</taxon>
    </lineage>
</organism>
<name>1FEH_HORVU</name>
<proteinExistence type="evidence at transcript level"/>
<comment type="function">
    <text evidence="2">Hydrolyzes inulin-type beta-(2,1)-fructans. May play a role as a beta-(2,1)-trimmer during graminan biosynthesis (By similarity).</text>
</comment>
<comment type="catalytic activity">
    <reaction evidence="2">
        <text>Hydrolysis of terminal, non-reducing (2-&gt;1)-linked beta-D-fructofuranose residues in fructans.</text>
        <dbReference type="EC" id="3.2.1.153"/>
    </reaction>
</comment>
<comment type="activity regulation">
    <text evidence="2">Inhibited by sucrose.</text>
</comment>
<comment type="similarity">
    <text evidence="3">Belongs to the glycosyl hydrolase 32 family.</text>
</comment>
<feature type="signal peptide" evidence="3">
    <location>
        <begin position="1"/>
        <end position="16"/>
    </location>
</feature>
<feature type="chain" id="PRO_0000395557" description="Fructan 1-exohydrolase" evidence="3">
    <location>
        <begin position="17"/>
        <end position="599"/>
    </location>
</feature>
<feature type="active site" evidence="1">
    <location>
        <position position="78"/>
    </location>
</feature>
<feature type="glycosylation site" description="N-linked (GlcNAc...) asparagine" evidence="3">
    <location>
        <position position="171"/>
    </location>
</feature>
<feature type="glycosylation site" description="N-linked (GlcNAc...) asparagine" evidence="3">
    <location>
        <position position="239"/>
    </location>
</feature>
<feature type="glycosylation site" description="N-linked (GlcNAc...) asparagine" evidence="3">
    <location>
        <position position="251"/>
    </location>
</feature>
<feature type="disulfide bond" evidence="1">
    <location>
        <begin position="449"/>
        <end position="495"/>
    </location>
</feature>
<accession>Q70AT7</accession>
<reference evidence="4 5" key="1">
    <citation type="submission" date="2003-10" db="EMBL/GenBank/DDBJ databases">
        <authorList>
            <person name="Nagaraj V.J."/>
        </authorList>
    </citation>
    <scope>NUCLEOTIDE SEQUENCE [MRNA]</scope>
</reference>
<protein>
    <recommendedName>
        <fullName evidence="5">Fructan 1-exohydrolase</fullName>
        <ecNumber>3.2.1.153</ecNumber>
    </recommendedName>
</protein>
<sequence>MAQAWAFLLLPALALASYASHLLLPAYITTPLCGGGDGARSFFLCAQAPKDQDQDPSPASTMYKTAFHFQPAKNWMNDPSGPMYFNGIYHEFYQYNLNGPIFGDIVWGHSVSTDLVNWIGLEPALVRDTPSDIDGCWTGSVTILPGGKPVIIYTGGNIDQHQTQNIAFPKNRSDPYLREWIKAANNPVLRPDEPGMNVIEFRDPTTGWIGPDGHWRMAVGGELNGYSAALLYKSEDFLNWTKVDHPPYSHNGSNMWECPDFFAALPGNNGGLDLSAAIPQGAKHALKMSVDSVDKYMIGVYDLQRDAFVPDNVVDDRRLWLRMDYGTFYASKSFFDSKKGRRIVWGWSGETDSPSDDLAKGWAGLHTIPRTIWLAADGKQLLQWPVEEIESLRTNEINHQGLELNKGDLFEIKEVDAFQADVEIDFELASIDEAEPFDPSWLLDPEKHCGEAGASVPGGIGPFGLVILASDNMDEHTEVYFRVYKSQEKYMVLMCSDLRRSSLRPGLEKPAYGGFFEFDLAKERKISLRTLIDRSAVESFGGGGRVCITSRVYPAVLANVGRAHIYAFNNGNAMVRVPQLSAWTMRKAQVNVEKGWSAI</sequence>
<evidence type="ECO:0000250" key="1">
    <source>
        <dbReference type="UniProtKB" id="Q43866"/>
    </source>
</evidence>
<evidence type="ECO:0000250" key="2">
    <source>
        <dbReference type="UniProtKB" id="Q84PN8"/>
    </source>
</evidence>
<evidence type="ECO:0000255" key="3"/>
<evidence type="ECO:0000305" key="4"/>
<evidence type="ECO:0000312" key="5">
    <source>
        <dbReference type="EMBL" id="CAE53426.1"/>
    </source>
</evidence>
<keyword id="KW-1015">Disulfide bond</keyword>
<keyword id="KW-0325">Glycoprotein</keyword>
<keyword id="KW-0326">Glycosidase</keyword>
<keyword id="KW-0378">Hydrolase</keyword>
<keyword id="KW-0732">Signal</keyword>
<gene>
    <name evidence="5" type="primary">1-FEH</name>
</gene>
<dbReference type="EC" id="3.2.1.153"/>
<dbReference type="EMBL" id="AJ605333">
    <property type="protein sequence ID" value="CAE53426.1"/>
    <property type="molecule type" value="mRNA"/>
</dbReference>
<dbReference type="SMR" id="Q70AT7"/>
<dbReference type="CAZy" id="GH32">
    <property type="family name" value="Glycoside Hydrolase Family 32"/>
</dbReference>
<dbReference type="GlyCosmos" id="Q70AT7">
    <property type="glycosylation" value="3 sites, No reported glycans"/>
</dbReference>
<dbReference type="ExpressionAtlas" id="Q70AT7">
    <property type="expression patterns" value="baseline and differential"/>
</dbReference>
<dbReference type="GO" id="GO:0033948">
    <property type="term" value="F:fructan beta-(2,1)-fructosidase activity"/>
    <property type="evidence" value="ECO:0007669"/>
    <property type="project" value="UniProtKB-EC"/>
</dbReference>
<dbReference type="GO" id="GO:0005975">
    <property type="term" value="P:carbohydrate metabolic process"/>
    <property type="evidence" value="ECO:0007669"/>
    <property type="project" value="InterPro"/>
</dbReference>
<dbReference type="CDD" id="cd18624">
    <property type="entry name" value="GH32_Fruct1-like"/>
    <property type="match status" value="1"/>
</dbReference>
<dbReference type="FunFam" id="2.115.10.20:FF:000001">
    <property type="entry name" value="Beta-fructofuranosidase, insoluble isoenzyme CWINV1"/>
    <property type="match status" value="1"/>
</dbReference>
<dbReference type="FunFam" id="2.60.120.560:FF:000002">
    <property type="entry name" value="Beta-fructofuranosidase, insoluble isoenzyme CWINV1"/>
    <property type="match status" value="1"/>
</dbReference>
<dbReference type="Gene3D" id="2.60.120.560">
    <property type="entry name" value="Exo-inulinase, domain 1"/>
    <property type="match status" value="1"/>
</dbReference>
<dbReference type="Gene3D" id="2.115.10.20">
    <property type="entry name" value="Glycosyl hydrolase domain, family 43"/>
    <property type="match status" value="1"/>
</dbReference>
<dbReference type="InterPro" id="IPR013320">
    <property type="entry name" value="ConA-like_dom_sf"/>
</dbReference>
<dbReference type="InterPro" id="IPR050551">
    <property type="entry name" value="Fructan_Metab_Enzymes"/>
</dbReference>
<dbReference type="InterPro" id="IPR001362">
    <property type="entry name" value="Glyco_hydro_32"/>
</dbReference>
<dbReference type="InterPro" id="IPR013189">
    <property type="entry name" value="Glyco_hydro_32_C"/>
</dbReference>
<dbReference type="InterPro" id="IPR013148">
    <property type="entry name" value="Glyco_hydro_32_N"/>
</dbReference>
<dbReference type="InterPro" id="IPR023296">
    <property type="entry name" value="Glyco_hydro_beta-prop_sf"/>
</dbReference>
<dbReference type="PANTHER" id="PTHR31953">
    <property type="entry name" value="BETA-FRUCTOFURANOSIDASE, INSOLUBLE ISOENZYME CWINV1-RELATED"/>
    <property type="match status" value="1"/>
</dbReference>
<dbReference type="Pfam" id="PF08244">
    <property type="entry name" value="Glyco_hydro_32C"/>
    <property type="match status" value="1"/>
</dbReference>
<dbReference type="Pfam" id="PF00251">
    <property type="entry name" value="Glyco_hydro_32N"/>
    <property type="match status" value="1"/>
</dbReference>
<dbReference type="SMART" id="SM00640">
    <property type="entry name" value="Glyco_32"/>
    <property type="match status" value="1"/>
</dbReference>
<dbReference type="SUPFAM" id="SSF75005">
    <property type="entry name" value="Arabinanase/levansucrase/invertase"/>
    <property type="match status" value="1"/>
</dbReference>
<dbReference type="SUPFAM" id="SSF49899">
    <property type="entry name" value="Concanavalin A-like lectins/glucanases"/>
    <property type="match status" value="1"/>
</dbReference>